<accession>A3QJF5</accession>
<organism>
    <name type="scientific">Shewanella loihica (strain ATCC BAA-1088 / PV-4)</name>
    <dbReference type="NCBI Taxonomy" id="323850"/>
    <lineage>
        <taxon>Bacteria</taxon>
        <taxon>Pseudomonadati</taxon>
        <taxon>Pseudomonadota</taxon>
        <taxon>Gammaproteobacteria</taxon>
        <taxon>Alteromonadales</taxon>
        <taxon>Shewanellaceae</taxon>
        <taxon>Shewanella</taxon>
    </lineage>
</organism>
<feature type="chain" id="PRO_1000020156" description="Methionyl-tRNA formyltransferase">
    <location>
        <begin position="1"/>
        <end position="324"/>
    </location>
</feature>
<feature type="binding site" evidence="1">
    <location>
        <begin position="112"/>
        <end position="115"/>
    </location>
    <ligand>
        <name>(6S)-5,6,7,8-tetrahydrofolate</name>
        <dbReference type="ChEBI" id="CHEBI:57453"/>
    </ligand>
</feature>
<keyword id="KW-0648">Protein biosynthesis</keyword>
<keyword id="KW-1185">Reference proteome</keyword>
<keyword id="KW-0808">Transferase</keyword>
<comment type="function">
    <text evidence="1">Attaches a formyl group to the free amino group of methionyl-tRNA(fMet). The formyl group appears to play a dual role in the initiator identity of N-formylmethionyl-tRNA by promoting its recognition by IF2 and preventing the misappropriation of this tRNA by the elongation apparatus.</text>
</comment>
<comment type="catalytic activity">
    <reaction evidence="1">
        <text>L-methionyl-tRNA(fMet) + (6R)-10-formyltetrahydrofolate = N-formyl-L-methionyl-tRNA(fMet) + (6S)-5,6,7,8-tetrahydrofolate + H(+)</text>
        <dbReference type="Rhea" id="RHEA:24380"/>
        <dbReference type="Rhea" id="RHEA-COMP:9952"/>
        <dbReference type="Rhea" id="RHEA-COMP:9953"/>
        <dbReference type="ChEBI" id="CHEBI:15378"/>
        <dbReference type="ChEBI" id="CHEBI:57453"/>
        <dbReference type="ChEBI" id="CHEBI:78530"/>
        <dbReference type="ChEBI" id="CHEBI:78844"/>
        <dbReference type="ChEBI" id="CHEBI:195366"/>
        <dbReference type="EC" id="2.1.2.9"/>
    </reaction>
</comment>
<comment type="similarity">
    <text evidence="1">Belongs to the Fmt family.</text>
</comment>
<dbReference type="EC" id="2.1.2.9" evidence="1"/>
<dbReference type="EMBL" id="CP000606">
    <property type="protein sequence ID" value="ABO25603.1"/>
    <property type="molecule type" value="Genomic_DNA"/>
</dbReference>
<dbReference type="RefSeq" id="WP_011867531.1">
    <property type="nucleotide sequence ID" value="NC_009092.1"/>
</dbReference>
<dbReference type="SMR" id="A3QJF5"/>
<dbReference type="STRING" id="323850.Shew_3737"/>
<dbReference type="KEGG" id="slo:Shew_3737"/>
<dbReference type="eggNOG" id="COG0223">
    <property type="taxonomic scope" value="Bacteria"/>
</dbReference>
<dbReference type="HOGENOM" id="CLU_033347_1_2_6"/>
<dbReference type="OrthoDB" id="9802815at2"/>
<dbReference type="Proteomes" id="UP000001558">
    <property type="component" value="Chromosome"/>
</dbReference>
<dbReference type="GO" id="GO:0005829">
    <property type="term" value="C:cytosol"/>
    <property type="evidence" value="ECO:0007669"/>
    <property type="project" value="TreeGrafter"/>
</dbReference>
<dbReference type="GO" id="GO:0004479">
    <property type="term" value="F:methionyl-tRNA formyltransferase activity"/>
    <property type="evidence" value="ECO:0007669"/>
    <property type="project" value="UniProtKB-UniRule"/>
</dbReference>
<dbReference type="CDD" id="cd08646">
    <property type="entry name" value="FMT_core_Met-tRNA-FMT_N"/>
    <property type="match status" value="1"/>
</dbReference>
<dbReference type="CDD" id="cd08704">
    <property type="entry name" value="Met_tRNA_FMT_C"/>
    <property type="match status" value="1"/>
</dbReference>
<dbReference type="FunFam" id="3.40.50.12230:FF:000001">
    <property type="entry name" value="Methionyl-tRNA formyltransferase"/>
    <property type="match status" value="1"/>
</dbReference>
<dbReference type="FunFam" id="3.40.50.170:FF:000003">
    <property type="entry name" value="Methionyl-tRNA formyltransferase"/>
    <property type="match status" value="1"/>
</dbReference>
<dbReference type="Gene3D" id="3.10.25.10">
    <property type="entry name" value="Formyl transferase, C-terminal domain"/>
    <property type="match status" value="1"/>
</dbReference>
<dbReference type="Gene3D" id="3.40.50.170">
    <property type="entry name" value="Formyl transferase, N-terminal domain"/>
    <property type="match status" value="1"/>
</dbReference>
<dbReference type="HAMAP" id="MF_00182">
    <property type="entry name" value="Formyl_trans"/>
    <property type="match status" value="1"/>
</dbReference>
<dbReference type="InterPro" id="IPR005794">
    <property type="entry name" value="Fmt"/>
</dbReference>
<dbReference type="InterPro" id="IPR005793">
    <property type="entry name" value="Formyl_trans_C"/>
</dbReference>
<dbReference type="InterPro" id="IPR037022">
    <property type="entry name" value="Formyl_trans_C_sf"/>
</dbReference>
<dbReference type="InterPro" id="IPR002376">
    <property type="entry name" value="Formyl_transf_N"/>
</dbReference>
<dbReference type="InterPro" id="IPR036477">
    <property type="entry name" value="Formyl_transf_N_sf"/>
</dbReference>
<dbReference type="InterPro" id="IPR011034">
    <property type="entry name" value="Formyl_transferase-like_C_sf"/>
</dbReference>
<dbReference type="InterPro" id="IPR001555">
    <property type="entry name" value="GART_AS"/>
</dbReference>
<dbReference type="InterPro" id="IPR044135">
    <property type="entry name" value="Met-tRNA-FMT_C"/>
</dbReference>
<dbReference type="InterPro" id="IPR041711">
    <property type="entry name" value="Met-tRNA-FMT_N"/>
</dbReference>
<dbReference type="NCBIfam" id="TIGR00460">
    <property type="entry name" value="fmt"/>
    <property type="match status" value="1"/>
</dbReference>
<dbReference type="PANTHER" id="PTHR11138">
    <property type="entry name" value="METHIONYL-TRNA FORMYLTRANSFERASE"/>
    <property type="match status" value="1"/>
</dbReference>
<dbReference type="PANTHER" id="PTHR11138:SF5">
    <property type="entry name" value="METHIONYL-TRNA FORMYLTRANSFERASE, MITOCHONDRIAL"/>
    <property type="match status" value="1"/>
</dbReference>
<dbReference type="Pfam" id="PF02911">
    <property type="entry name" value="Formyl_trans_C"/>
    <property type="match status" value="1"/>
</dbReference>
<dbReference type="Pfam" id="PF00551">
    <property type="entry name" value="Formyl_trans_N"/>
    <property type="match status" value="1"/>
</dbReference>
<dbReference type="SUPFAM" id="SSF50486">
    <property type="entry name" value="FMT C-terminal domain-like"/>
    <property type="match status" value="1"/>
</dbReference>
<dbReference type="SUPFAM" id="SSF53328">
    <property type="entry name" value="Formyltransferase"/>
    <property type="match status" value="1"/>
</dbReference>
<dbReference type="PROSITE" id="PS00373">
    <property type="entry name" value="GART"/>
    <property type="match status" value="1"/>
</dbReference>
<gene>
    <name evidence="1" type="primary">fmt</name>
    <name type="ordered locus">Shew_3737</name>
</gene>
<sequence length="324" mass="34832">MKPLKILFAGTPDFAARHLQALIDSEHQVIGVYSQPDRPAGRGKKLQASPVKALALEHDIPVYQPVSLRNEDAQAELAALGADIMVVVAYGLILPQVVLDTPRLGCINVHGSILPRWRGAAPIQRALWAGDAATGVTIMQMDIGLDTGDMLLKTHLPIEDRDTSASLYEKLAEQGPSALIQALKGLAEGSLTPEPQDEALANYAEKLSKEEAQLDWRKPAEQLWREVRAFNPWPASHFPHQDAAIKVWQASVSIEAAKQAPGTIIRADKQGIAVATGEGALVLETIQLPGKKAMAVADVLNARGDWFTPGTQLQGVTPADEAQA</sequence>
<evidence type="ECO:0000255" key="1">
    <source>
        <dbReference type="HAMAP-Rule" id="MF_00182"/>
    </source>
</evidence>
<reference key="1">
    <citation type="submission" date="2007-03" db="EMBL/GenBank/DDBJ databases">
        <title>Complete sequence of Shewanella loihica PV-4.</title>
        <authorList>
            <consortium name="US DOE Joint Genome Institute"/>
            <person name="Copeland A."/>
            <person name="Lucas S."/>
            <person name="Lapidus A."/>
            <person name="Barry K."/>
            <person name="Detter J.C."/>
            <person name="Glavina del Rio T."/>
            <person name="Hammon N."/>
            <person name="Israni S."/>
            <person name="Dalin E."/>
            <person name="Tice H."/>
            <person name="Pitluck S."/>
            <person name="Chain P."/>
            <person name="Malfatti S."/>
            <person name="Shin M."/>
            <person name="Vergez L."/>
            <person name="Schmutz J."/>
            <person name="Larimer F."/>
            <person name="Land M."/>
            <person name="Hauser L."/>
            <person name="Kyrpides N."/>
            <person name="Mikhailova N."/>
            <person name="Romine M.F."/>
            <person name="Serres G."/>
            <person name="Fredrickson J."/>
            <person name="Tiedje J."/>
            <person name="Richardson P."/>
        </authorList>
    </citation>
    <scope>NUCLEOTIDE SEQUENCE [LARGE SCALE GENOMIC DNA]</scope>
    <source>
        <strain>ATCC BAA-1088 / PV-4</strain>
    </source>
</reference>
<protein>
    <recommendedName>
        <fullName evidence="1">Methionyl-tRNA formyltransferase</fullName>
        <ecNumber evidence="1">2.1.2.9</ecNumber>
    </recommendedName>
</protein>
<name>FMT_SHELP</name>
<proteinExistence type="inferred from homology"/>